<comment type="function">
    <text evidence="6">Structural component of ciliary and flagellar microtubules. Plays a key role in the assembly or attachment of the inner dynein arm to microtubules in flagella and cilia. Forms filamentous polymers in the walls of ciliary and flagellar microtubules.</text>
</comment>
<comment type="subcellular location">
    <subcellularLocation>
        <location evidence="3">Cytoplasm</location>
        <location evidence="3">Cytoskeleton</location>
        <location evidence="3">Flagellum axoneme</location>
    </subcellularLocation>
    <subcellularLocation>
        <location evidence="3">Cytoplasm</location>
        <location evidence="3">Cytoskeleton</location>
        <location evidence="3">Flagellum basal body</location>
    </subcellularLocation>
</comment>
<comment type="PTM">
    <text evidence="4">Asymmetrically dimethylated at Arg-462 during flagellum resorption. Probably methylated by PRMT1.</text>
</comment>
<comment type="disruption phenotype">
    <text evidence="3">defects in axonemal inner-arm dynein.</text>
</comment>
<comment type="similarity">
    <text evidence="5">Belongs to the tektin family.</text>
</comment>
<accession>A8J8F6</accession>
<accession>Q7Y084</accession>
<gene>
    <name evidence="7" type="ORF">CHLREDRAFT_24358</name>
</gene>
<reference key="1">
    <citation type="journal article" date="2004" name="Mol. Biol. Cell">
        <title>A tektin homologue is decreased in chlamydomonas mutants lacking an axonemal inner-arm dynein.</title>
        <authorList>
            <person name="Yanagisawa H.A."/>
            <person name="Kamiya R."/>
        </authorList>
    </citation>
    <scope>NUCLEOTIDE SEQUENCE [MRNA]</scope>
    <scope>SUBCELLULAR LOCATION</scope>
    <scope>DISRUPTION PHENOTYPE</scope>
    <source>
        <strain>21gr / CC-1690</strain>
    </source>
</reference>
<reference key="2">
    <citation type="journal article" date="2007" name="Science">
        <title>The Chlamydomonas genome reveals the evolution of key animal and plant functions.</title>
        <authorList>
            <person name="Merchant S.S."/>
            <person name="Prochnik S.E."/>
            <person name="Vallon O."/>
            <person name="Harris E.H."/>
            <person name="Karpowicz S.J."/>
            <person name="Witman G.B."/>
            <person name="Terry A."/>
            <person name="Salamov A."/>
            <person name="Fritz-Laylin L.K."/>
            <person name="Marechal-Drouard L."/>
            <person name="Marshall W.F."/>
            <person name="Qu L.H."/>
            <person name="Nelson D.R."/>
            <person name="Sanderfoot A.A."/>
            <person name="Spalding M.H."/>
            <person name="Kapitonov V.V."/>
            <person name="Ren Q."/>
            <person name="Ferris P."/>
            <person name="Lindquist E."/>
            <person name="Shapiro H."/>
            <person name="Lucas S.M."/>
            <person name="Grimwood J."/>
            <person name="Schmutz J."/>
            <person name="Cardol P."/>
            <person name="Cerutti H."/>
            <person name="Chanfreau G."/>
            <person name="Chen C.L."/>
            <person name="Cognat V."/>
            <person name="Croft M.T."/>
            <person name="Dent R."/>
            <person name="Dutcher S."/>
            <person name="Fernandez E."/>
            <person name="Fukuzawa H."/>
            <person name="Gonzalez-Ballester D."/>
            <person name="Gonzalez-Halphen D."/>
            <person name="Hallmann A."/>
            <person name="Hanikenne M."/>
            <person name="Hippler M."/>
            <person name="Inwood W."/>
            <person name="Jabbari K."/>
            <person name="Kalanon M."/>
            <person name="Kuras R."/>
            <person name="Lefebvre P.A."/>
            <person name="Lemaire S.D."/>
            <person name="Lobanov A.V."/>
            <person name="Lohr M."/>
            <person name="Manuell A."/>
            <person name="Meier I."/>
            <person name="Mets L."/>
            <person name="Mittag M."/>
            <person name="Mittelmeier T."/>
            <person name="Moroney J.V."/>
            <person name="Moseley J."/>
            <person name="Napoli C."/>
            <person name="Nedelcu A.M."/>
            <person name="Niyogi K."/>
            <person name="Novoselov S.V."/>
            <person name="Paulsen I.T."/>
            <person name="Pazour G.J."/>
            <person name="Purton S."/>
            <person name="Ral J.P."/>
            <person name="Riano-Pachon D.M."/>
            <person name="Riekhof W."/>
            <person name="Rymarquis L."/>
            <person name="Schroda M."/>
            <person name="Stern D."/>
            <person name="Umen J."/>
            <person name="Willows R."/>
            <person name="Wilson N."/>
            <person name="Zimmer S.L."/>
            <person name="Allmer J."/>
            <person name="Balk J."/>
            <person name="Bisova K."/>
            <person name="Chen C.J."/>
            <person name="Elias M."/>
            <person name="Gendler K."/>
            <person name="Hauser C."/>
            <person name="Lamb M.R."/>
            <person name="Ledford H."/>
            <person name="Long J.C."/>
            <person name="Minagawa J."/>
            <person name="Page M.D."/>
            <person name="Pan J."/>
            <person name="Pootakham W."/>
            <person name="Roje S."/>
            <person name="Rose A."/>
            <person name="Stahlberg E."/>
            <person name="Terauchi A.M."/>
            <person name="Yang P."/>
            <person name="Ball S."/>
            <person name="Bowler C."/>
            <person name="Dieckmann C.L."/>
            <person name="Gladyshev V.N."/>
            <person name="Green P."/>
            <person name="Jorgensen R."/>
            <person name="Mayfield S."/>
            <person name="Mueller-Roeber B."/>
            <person name="Rajamani S."/>
            <person name="Sayre R.T."/>
            <person name="Brokstein P."/>
            <person name="Dubchak I."/>
            <person name="Goodstein D."/>
            <person name="Hornick L."/>
            <person name="Huang Y.W."/>
            <person name="Jhaveri J."/>
            <person name="Luo Y."/>
            <person name="Martinez D."/>
            <person name="Ngau W.C."/>
            <person name="Otillar B."/>
            <person name="Poliakov A."/>
            <person name="Porter A."/>
            <person name="Szajkowski L."/>
            <person name="Werner G."/>
            <person name="Zhou K."/>
            <person name="Grigoriev I.V."/>
            <person name="Rokhsar D.S."/>
            <person name="Grossman A.R."/>
        </authorList>
    </citation>
    <scope>NUCLEOTIDE SEQUENCE [LARGE SCALE GENOMIC DNA]</scope>
    <source>
        <strain>CC-503</strain>
        <strain>cw92</strain>
    </source>
</reference>
<reference key="3">
    <citation type="journal article" date="2013" name="Biochemistry">
        <title>Methylation of structural components of the axoneme occurs during flagellar disassembly.</title>
        <authorList>
            <person name="Werner-Peterson R."/>
            <person name="Sloboda R.D."/>
        </authorList>
    </citation>
    <scope>METHYLATION AT ARG-462</scope>
</reference>
<keyword id="KW-0966">Cell projection</keyword>
<keyword id="KW-0969">Cilium</keyword>
<keyword id="KW-0175">Coiled coil</keyword>
<keyword id="KW-0963">Cytoplasm</keyword>
<keyword id="KW-0206">Cytoskeleton</keyword>
<keyword id="KW-0282">Flagellum</keyword>
<keyword id="KW-0488">Methylation</keyword>
<dbReference type="EMBL" id="AB111498">
    <property type="protein sequence ID" value="BAC77347.1"/>
    <property type="molecule type" value="mRNA"/>
</dbReference>
<dbReference type="EMBL" id="DS496144">
    <property type="protein sequence ID" value="EDO99707.1"/>
    <property type="molecule type" value="Genomic_DNA"/>
</dbReference>
<dbReference type="RefSeq" id="XP_001697824.1">
    <property type="nucleotide sequence ID" value="XM_001697772.1"/>
</dbReference>
<dbReference type="SMR" id="A8J8F6"/>
<dbReference type="iPTMnet" id="A8J8F6"/>
<dbReference type="PaxDb" id="3055-EDO99707"/>
<dbReference type="EnsemblPlants" id="PNW71473">
    <property type="protein sequence ID" value="PNW71473"/>
    <property type="gene ID" value="CHLRE_16g655750v5"/>
</dbReference>
<dbReference type="GeneID" id="5723451"/>
<dbReference type="Gramene" id="PNW71473">
    <property type="protein sequence ID" value="PNW71473"/>
    <property type="gene ID" value="CHLRE_16g655750v5"/>
</dbReference>
<dbReference type="KEGG" id="cre:CHLRE_16g655750v5"/>
<dbReference type="eggNOG" id="KOG2685">
    <property type="taxonomic scope" value="Eukaryota"/>
</dbReference>
<dbReference type="HOGENOM" id="CLU_566680_0_0_1"/>
<dbReference type="OMA" id="RNLEDTH"/>
<dbReference type="OrthoDB" id="10054259at2759"/>
<dbReference type="GO" id="GO:0005737">
    <property type="term" value="C:cytoplasm"/>
    <property type="evidence" value="ECO:0007669"/>
    <property type="project" value="UniProtKB-KW"/>
</dbReference>
<dbReference type="GO" id="GO:0005856">
    <property type="term" value="C:cytoskeleton"/>
    <property type="evidence" value="ECO:0007669"/>
    <property type="project" value="UniProtKB-KW"/>
</dbReference>
<dbReference type="GO" id="GO:0031514">
    <property type="term" value="C:motile cilium"/>
    <property type="evidence" value="ECO:0007669"/>
    <property type="project" value="UniProtKB-KW"/>
</dbReference>
<dbReference type="GO" id="GO:0060294">
    <property type="term" value="P:cilium movement involved in cell motility"/>
    <property type="evidence" value="ECO:0007669"/>
    <property type="project" value="InterPro"/>
</dbReference>
<dbReference type="InterPro" id="IPR048256">
    <property type="entry name" value="Tektin-like"/>
</dbReference>
<dbReference type="InterPro" id="IPR000435">
    <property type="entry name" value="Tektins"/>
</dbReference>
<dbReference type="PANTHER" id="PTHR19960">
    <property type="entry name" value="TEKTIN"/>
    <property type="match status" value="1"/>
</dbReference>
<dbReference type="PANTHER" id="PTHR19960:SF25">
    <property type="entry name" value="TEKTIN-1"/>
    <property type="match status" value="1"/>
</dbReference>
<dbReference type="Pfam" id="PF03148">
    <property type="entry name" value="Tektin"/>
    <property type="match status" value="1"/>
</dbReference>
<evidence type="ECO:0000255" key="1"/>
<evidence type="ECO:0000256" key="2">
    <source>
        <dbReference type="SAM" id="MobiDB-lite"/>
    </source>
</evidence>
<evidence type="ECO:0000269" key="3">
    <source>
    </source>
</evidence>
<evidence type="ECO:0000269" key="4">
    <source>
    </source>
</evidence>
<evidence type="ECO:0000305" key="5"/>
<evidence type="ECO:0000305" key="6">
    <source>
    </source>
</evidence>
<evidence type="ECO:0000312" key="7">
    <source>
        <dbReference type="EMBL" id="EDO99707.1"/>
    </source>
</evidence>
<organism>
    <name type="scientific">Chlamydomonas reinhardtii</name>
    <name type="common">Chlamydomonas smithii</name>
    <dbReference type="NCBI Taxonomy" id="3055"/>
    <lineage>
        <taxon>Eukaryota</taxon>
        <taxon>Viridiplantae</taxon>
        <taxon>Chlorophyta</taxon>
        <taxon>core chlorophytes</taxon>
        <taxon>Chlorophyceae</taxon>
        <taxon>CS clade</taxon>
        <taxon>Chlamydomonadales</taxon>
        <taxon>Chlamydomonadaceae</taxon>
        <taxon>Chlamydomonas</taxon>
    </lineage>
</organism>
<protein>
    <recommendedName>
        <fullName evidence="5">Tektin</fullName>
    </recommendedName>
</protein>
<proteinExistence type="evidence at protein level"/>
<sequence>MPSYNHTSNGVNMANFRALGGKNTGRGGTYRAPYEWTLESVEQMGLGATENRMSSTLRDASSQLQAVASATVANDISIVDRALTTKLSQTESLKNMLETCLAEVISEIAELLSTKKRLEERNGKVQAKIGVNSNRMQVRSSRPPREMTMDEVEKGLIKQQGMLGSFSDRVARAVAQVDREVAQLEAVRAKLEADLRDKTEALRVDEAVLSIPTDPTVEGTLSPTFRRGAADCPPKTPHTWVRNTEDNLRNAHHWLADSARLRKAIAHAVANSRATEHDVANRLNENMLAKVAATRNLREDLQAQLEKVREEQARAKGQRSALTSALDDKRGPLAQARERLAVRKARPCRENVNDEVEAALAKEVAHLAAVTQQLSVKVAAVDREIAALDATAAQLESNIADKDDALRVDERVVLLDGRINLAQRPPSSVASFAMSDMSAPRTQTLARIRELEASLTSARREREAMESSIRQLRDTMGGGGAF</sequence>
<name>TEKT_CHLRE</name>
<feature type="chain" id="PRO_0000431950" description="Tektin">
    <location>
        <begin position="1"/>
        <end position="482"/>
    </location>
</feature>
<feature type="region of interest" description="Disordered" evidence="2">
    <location>
        <begin position="311"/>
        <end position="330"/>
    </location>
</feature>
<feature type="coiled-coil region" evidence="1">
    <location>
        <begin position="100"/>
        <end position="129"/>
    </location>
</feature>
<feature type="coiled-coil region" evidence="1">
    <location>
        <begin position="171"/>
        <end position="204"/>
    </location>
</feature>
<feature type="coiled-coil region" evidence="1">
    <location>
        <begin position="282"/>
        <end position="324"/>
    </location>
</feature>
<feature type="coiled-coil region" evidence="1">
    <location>
        <begin position="376"/>
        <end position="407"/>
    </location>
</feature>
<feature type="coiled-coil region" evidence="1">
    <location>
        <begin position="441"/>
        <end position="478"/>
    </location>
</feature>
<feature type="modified residue" description="Asymmetric dimethylarginine" evidence="4">
    <location>
        <position position="462"/>
    </location>
</feature>
<feature type="sequence conflict" description="In Ref. 1; BAC77347." evidence="5" ref="1">
    <original>S</original>
    <variation>N</variation>
    <location>
        <position position="77"/>
    </location>
</feature>
<feature type="sequence conflict" description="In Ref. 1; BAC77347." evidence="5" ref="1">
    <original>T</original>
    <variation>A</variation>
    <location>
        <position position="224"/>
    </location>
</feature>
<feature type="sequence conflict" description="In Ref. 1; BAC77347." evidence="5" ref="1">
    <original>A</original>
    <variation>V</variation>
    <location>
        <position position="464"/>
    </location>
</feature>